<gene>
    <name evidence="2" type="primary">psbH</name>
</gene>
<sequence length="78" mass="8343">MATKINDDILSTPGKKTSVGDILKPLNSEYGKVAPGWGTTVLMGVFMALFAVFLVIILEIYNASVLLDGIPVSWNSLS</sequence>
<keyword id="KW-0150">Chloroplast</keyword>
<keyword id="KW-0472">Membrane</keyword>
<keyword id="KW-0597">Phosphoprotein</keyword>
<keyword id="KW-0602">Photosynthesis</keyword>
<keyword id="KW-0604">Photosystem II</keyword>
<keyword id="KW-0934">Plastid</keyword>
<keyword id="KW-0793">Thylakoid</keyword>
<keyword id="KW-0812">Transmembrane</keyword>
<keyword id="KW-1133">Transmembrane helix</keyword>
<accession>Q71KP6</accession>
<reference key="1">
    <citation type="submission" date="2002-02" db="EMBL/GenBank/DDBJ databases">
        <title>psbB gene cluster in Charophyceae.</title>
        <authorList>
            <person name="Lee J."/>
            <person name="Manhart J.R."/>
        </authorList>
    </citation>
    <scope>NUCLEOTIDE SEQUENCE [GENOMIC DNA]</scope>
</reference>
<dbReference type="EMBL" id="AF482497">
    <property type="protein sequence ID" value="AAQ05911.1"/>
    <property type="molecule type" value="Genomic_DNA"/>
</dbReference>
<dbReference type="SMR" id="Q71KP6"/>
<dbReference type="GO" id="GO:0009535">
    <property type="term" value="C:chloroplast thylakoid membrane"/>
    <property type="evidence" value="ECO:0007669"/>
    <property type="project" value="UniProtKB-SubCell"/>
</dbReference>
<dbReference type="GO" id="GO:0009523">
    <property type="term" value="C:photosystem II"/>
    <property type="evidence" value="ECO:0007669"/>
    <property type="project" value="UniProtKB-KW"/>
</dbReference>
<dbReference type="GO" id="GO:0042301">
    <property type="term" value="F:phosphate ion binding"/>
    <property type="evidence" value="ECO:0007669"/>
    <property type="project" value="InterPro"/>
</dbReference>
<dbReference type="GO" id="GO:0015979">
    <property type="term" value="P:photosynthesis"/>
    <property type="evidence" value="ECO:0007669"/>
    <property type="project" value="UniProtKB-UniRule"/>
</dbReference>
<dbReference type="GO" id="GO:0050821">
    <property type="term" value="P:protein stabilization"/>
    <property type="evidence" value="ECO:0007669"/>
    <property type="project" value="InterPro"/>
</dbReference>
<dbReference type="Gene3D" id="1.20.5.880">
    <property type="entry name" value="Photosystem II reaction center protein H"/>
    <property type="match status" value="1"/>
</dbReference>
<dbReference type="HAMAP" id="MF_00752">
    <property type="entry name" value="PSII_PsbH"/>
    <property type="match status" value="1"/>
</dbReference>
<dbReference type="InterPro" id="IPR001056">
    <property type="entry name" value="PSII_PsbH"/>
</dbReference>
<dbReference type="InterPro" id="IPR036863">
    <property type="entry name" value="PSII_PsbH_sf"/>
</dbReference>
<dbReference type="NCBIfam" id="NF002728">
    <property type="entry name" value="PRK02624.1"/>
    <property type="match status" value="1"/>
</dbReference>
<dbReference type="PANTHER" id="PTHR34469">
    <property type="entry name" value="PHOTOSYSTEM II REACTION CENTER PROTEIN H"/>
    <property type="match status" value="1"/>
</dbReference>
<dbReference type="PANTHER" id="PTHR34469:SF4">
    <property type="entry name" value="PHOTOSYSTEM II REACTION CENTER PROTEIN H"/>
    <property type="match status" value="1"/>
</dbReference>
<dbReference type="Pfam" id="PF00737">
    <property type="entry name" value="PsbH"/>
    <property type="match status" value="1"/>
</dbReference>
<dbReference type="SUPFAM" id="SSF161025">
    <property type="entry name" value="Photosystem II 10 kDa phosphoprotein PsbH"/>
    <property type="match status" value="1"/>
</dbReference>
<organism>
    <name type="scientific">Spirogyra maxima</name>
    <name type="common">Green alga</name>
    <dbReference type="NCBI Taxonomy" id="3180"/>
    <lineage>
        <taxon>Eukaryota</taxon>
        <taxon>Viridiplantae</taxon>
        <taxon>Streptophyta</taxon>
        <taxon>Zygnematophyceae</taxon>
        <taxon>Zygnematophycidae</taxon>
        <taxon>Zygnematales</taxon>
        <taxon>Zygnemataceae</taxon>
        <taxon>Spirogyra</taxon>
    </lineage>
</organism>
<feature type="initiator methionine" description="Removed" evidence="1">
    <location>
        <position position="1"/>
    </location>
</feature>
<feature type="chain" id="PRO_0000070536" description="Photosystem II reaction center protein H">
    <location>
        <begin position="2"/>
        <end position="78"/>
    </location>
</feature>
<feature type="transmembrane region" description="Helical" evidence="2">
    <location>
        <begin position="41"/>
        <end position="61"/>
    </location>
</feature>
<feature type="modified residue" description="Phosphothreonine" evidence="2">
    <location>
        <position position="3"/>
    </location>
</feature>
<comment type="function">
    <text evidence="2">One of the components of the core complex of photosystem II (PSII), required for its stability and/or assembly. PSII is a light-driven water:plastoquinone oxidoreductase that uses light energy to abstract electrons from H(2)O, generating O(2) and a proton gradient subsequently used for ATP formation. It consists of a core antenna complex that captures photons, and an electron transfer chain that converts photonic excitation into a charge separation.</text>
</comment>
<comment type="subunit">
    <text evidence="2">PSII is composed of 1 copy each of membrane proteins PsbA, PsbB, PsbC, PsbD, PsbE, PsbF, PsbH, PsbI, PsbJ, PsbK, PsbL, PsbM, PsbT, PsbX, PsbY, PsbZ, Psb30/Ycf12, at least 3 peripheral proteins of the oxygen-evolving complex and a large number of cofactors. It forms dimeric complexes.</text>
</comment>
<comment type="subcellular location">
    <subcellularLocation>
        <location evidence="2">Plastid</location>
        <location evidence="2">Chloroplast thylakoid membrane</location>
        <topology evidence="2">Single-pass membrane protein</topology>
    </subcellularLocation>
</comment>
<comment type="PTM">
    <text evidence="2">Phosphorylation is a light-dependent reaction catalyzed by a membrane-bound kinase; phosphorylation occurs on Thr residue(s) in the N-terminus of the protein.</text>
</comment>
<comment type="similarity">
    <text evidence="2">Belongs to the PsbH family.</text>
</comment>
<name>PSBH_SPIMX</name>
<proteinExistence type="inferred from homology"/>
<geneLocation type="chloroplast"/>
<protein>
    <recommendedName>
        <fullName evidence="2">Photosystem II reaction center protein H</fullName>
        <shortName evidence="2">PSII-H</shortName>
    </recommendedName>
    <alternativeName>
        <fullName evidence="2">Photosystem II 10 kDa phosphoprotein</fullName>
    </alternativeName>
</protein>
<evidence type="ECO:0000250" key="1">
    <source>
        <dbReference type="UniProtKB" id="P56780"/>
    </source>
</evidence>
<evidence type="ECO:0000255" key="2">
    <source>
        <dbReference type="HAMAP-Rule" id="MF_00752"/>
    </source>
</evidence>